<sequence length="495" mass="52248">MSELSSLTIAAARDKLRAREITATELTEACLAEVEGAGALGAFVHNTPDLARAQAEAADARLAAGDAPAMCGIPLGIKDLFCTKGVPSQAASAILGGFKPEYESTVTSQLFAAGAVMLGKLNMDEFAMGSSNETSTYGNAVNPWRRGNEDTALTPGGSSGGSASAVAADLCLAATGTDTGGSIRQPAAFVGITGLKPTYGRCSRWGIVAFASSLDQAGPMTKDVRDCAIMLGAMAGHDPKDSTSADLPVPDFEAMLTGDIRGKVIGIPKEYRMDGMPEEIEALWSRGAEMLRDAGAELRDITLPHTKYALPAYYVIAPAEASSNLARYDGVRFGHRAKLAQGDGITEMYEKTRAEGFGHEVQRRIMIGTYVLSAGFYDAYYNRARKVRALIKRDFDEVFAAGVDAILTPATPSAAFGLGEMAEADPVQMYLNDVFTVTVNLAGLPGIAVPAGLDKQGLPLGLQLIGRPWEEGDLLNTAYALEQAAGFVAKPNRWW</sequence>
<comment type="function">
    <text evidence="1">Allows the formation of correctly charged Gln-tRNA(Gln) through the transamidation of misacylated Glu-tRNA(Gln) in organisms which lack glutaminyl-tRNA synthetase. The reaction takes place in the presence of glutamine and ATP through an activated gamma-phospho-Glu-tRNA(Gln).</text>
</comment>
<comment type="catalytic activity">
    <reaction evidence="1">
        <text>L-glutamyl-tRNA(Gln) + L-glutamine + ATP + H2O = L-glutaminyl-tRNA(Gln) + L-glutamate + ADP + phosphate + H(+)</text>
        <dbReference type="Rhea" id="RHEA:17521"/>
        <dbReference type="Rhea" id="RHEA-COMP:9681"/>
        <dbReference type="Rhea" id="RHEA-COMP:9684"/>
        <dbReference type="ChEBI" id="CHEBI:15377"/>
        <dbReference type="ChEBI" id="CHEBI:15378"/>
        <dbReference type="ChEBI" id="CHEBI:29985"/>
        <dbReference type="ChEBI" id="CHEBI:30616"/>
        <dbReference type="ChEBI" id="CHEBI:43474"/>
        <dbReference type="ChEBI" id="CHEBI:58359"/>
        <dbReference type="ChEBI" id="CHEBI:78520"/>
        <dbReference type="ChEBI" id="CHEBI:78521"/>
        <dbReference type="ChEBI" id="CHEBI:456216"/>
        <dbReference type="EC" id="6.3.5.7"/>
    </reaction>
</comment>
<comment type="subunit">
    <text evidence="1">Heterotrimer of A, B and C subunits.</text>
</comment>
<comment type="similarity">
    <text evidence="1">Belongs to the amidase family. GatA subfamily.</text>
</comment>
<evidence type="ECO:0000255" key="1">
    <source>
        <dbReference type="HAMAP-Rule" id="MF_00120"/>
    </source>
</evidence>
<feature type="chain" id="PRO_1000076129" description="Glutamyl-tRNA(Gln) amidotransferase subunit A">
    <location>
        <begin position="1"/>
        <end position="495"/>
    </location>
</feature>
<feature type="active site" description="Charge relay system" evidence="1">
    <location>
        <position position="78"/>
    </location>
</feature>
<feature type="active site" description="Charge relay system" evidence="1">
    <location>
        <position position="158"/>
    </location>
</feature>
<feature type="active site" description="Acyl-ester intermediate" evidence="1">
    <location>
        <position position="182"/>
    </location>
</feature>
<accession>A8LJ23</accession>
<reference key="1">
    <citation type="journal article" date="2010" name="ISME J.">
        <title>The complete genome sequence of the algal symbiont Dinoroseobacter shibae: a hitchhiker's guide to life in the sea.</title>
        <authorList>
            <person name="Wagner-Dobler I."/>
            <person name="Ballhausen B."/>
            <person name="Berger M."/>
            <person name="Brinkhoff T."/>
            <person name="Buchholz I."/>
            <person name="Bunk B."/>
            <person name="Cypionka H."/>
            <person name="Daniel R."/>
            <person name="Drepper T."/>
            <person name="Gerdts G."/>
            <person name="Hahnke S."/>
            <person name="Han C."/>
            <person name="Jahn D."/>
            <person name="Kalhoefer D."/>
            <person name="Kiss H."/>
            <person name="Klenk H.P."/>
            <person name="Kyrpides N."/>
            <person name="Liebl W."/>
            <person name="Liesegang H."/>
            <person name="Meincke L."/>
            <person name="Pati A."/>
            <person name="Petersen J."/>
            <person name="Piekarski T."/>
            <person name="Pommerenke C."/>
            <person name="Pradella S."/>
            <person name="Pukall R."/>
            <person name="Rabus R."/>
            <person name="Stackebrandt E."/>
            <person name="Thole S."/>
            <person name="Thompson L."/>
            <person name="Tielen P."/>
            <person name="Tomasch J."/>
            <person name="von Jan M."/>
            <person name="Wanphrut N."/>
            <person name="Wichels A."/>
            <person name="Zech H."/>
            <person name="Simon M."/>
        </authorList>
    </citation>
    <scope>NUCLEOTIDE SEQUENCE [LARGE SCALE GENOMIC DNA]</scope>
    <source>
        <strain>DSM 16493 / NCIMB 14021 / DFL 12</strain>
    </source>
</reference>
<keyword id="KW-0067">ATP-binding</keyword>
<keyword id="KW-0436">Ligase</keyword>
<keyword id="KW-0547">Nucleotide-binding</keyword>
<keyword id="KW-0648">Protein biosynthesis</keyword>
<keyword id="KW-1185">Reference proteome</keyword>
<dbReference type="EC" id="6.3.5.7" evidence="1"/>
<dbReference type="EMBL" id="CP000830">
    <property type="protein sequence ID" value="ABV94518.1"/>
    <property type="molecule type" value="Genomic_DNA"/>
</dbReference>
<dbReference type="RefSeq" id="WP_012179446.1">
    <property type="nucleotide sequence ID" value="NC_009952.1"/>
</dbReference>
<dbReference type="SMR" id="A8LJ23"/>
<dbReference type="STRING" id="398580.Dshi_2785"/>
<dbReference type="KEGG" id="dsh:Dshi_2785"/>
<dbReference type="eggNOG" id="COG0154">
    <property type="taxonomic scope" value="Bacteria"/>
</dbReference>
<dbReference type="HOGENOM" id="CLU_009600_0_3_5"/>
<dbReference type="OrthoDB" id="9811471at2"/>
<dbReference type="Proteomes" id="UP000006833">
    <property type="component" value="Chromosome"/>
</dbReference>
<dbReference type="GO" id="GO:0030956">
    <property type="term" value="C:glutamyl-tRNA(Gln) amidotransferase complex"/>
    <property type="evidence" value="ECO:0007669"/>
    <property type="project" value="InterPro"/>
</dbReference>
<dbReference type="GO" id="GO:0005524">
    <property type="term" value="F:ATP binding"/>
    <property type="evidence" value="ECO:0007669"/>
    <property type="project" value="UniProtKB-KW"/>
</dbReference>
<dbReference type="GO" id="GO:0050567">
    <property type="term" value="F:glutaminyl-tRNA synthase (glutamine-hydrolyzing) activity"/>
    <property type="evidence" value="ECO:0007669"/>
    <property type="project" value="UniProtKB-UniRule"/>
</dbReference>
<dbReference type="GO" id="GO:0006412">
    <property type="term" value="P:translation"/>
    <property type="evidence" value="ECO:0007669"/>
    <property type="project" value="UniProtKB-UniRule"/>
</dbReference>
<dbReference type="Gene3D" id="3.90.1300.10">
    <property type="entry name" value="Amidase signature (AS) domain"/>
    <property type="match status" value="1"/>
</dbReference>
<dbReference type="HAMAP" id="MF_00120">
    <property type="entry name" value="GatA"/>
    <property type="match status" value="1"/>
</dbReference>
<dbReference type="InterPro" id="IPR000120">
    <property type="entry name" value="Amidase"/>
</dbReference>
<dbReference type="InterPro" id="IPR020556">
    <property type="entry name" value="Amidase_CS"/>
</dbReference>
<dbReference type="InterPro" id="IPR023631">
    <property type="entry name" value="Amidase_dom"/>
</dbReference>
<dbReference type="InterPro" id="IPR036928">
    <property type="entry name" value="AS_sf"/>
</dbReference>
<dbReference type="InterPro" id="IPR004412">
    <property type="entry name" value="GatA"/>
</dbReference>
<dbReference type="NCBIfam" id="TIGR00132">
    <property type="entry name" value="gatA"/>
    <property type="match status" value="1"/>
</dbReference>
<dbReference type="PANTHER" id="PTHR11895:SF151">
    <property type="entry name" value="GLUTAMYL-TRNA(GLN) AMIDOTRANSFERASE SUBUNIT A"/>
    <property type="match status" value="1"/>
</dbReference>
<dbReference type="PANTHER" id="PTHR11895">
    <property type="entry name" value="TRANSAMIDASE"/>
    <property type="match status" value="1"/>
</dbReference>
<dbReference type="Pfam" id="PF01425">
    <property type="entry name" value="Amidase"/>
    <property type="match status" value="1"/>
</dbReference>
<dbReference type="SUPFAM" id="SSF75304">
    <property type="entry name" value="Amidase signature (AS) enzymes"/>
    <property type="match status" value="1"/>
</dbReference>
<dbReference type="PROSITE" id="PS00571">
    <property type="entry name" value="AMIDASES"/>
    <property type="match status" value="1"/>
</dbReference>
<name>GATA_DINSH</name>
<organism>
    <name type="scientific">Dinoroseobacter shibae (strain DSM 16493 / NCIMB 14021 / DFL 12)</name>
    <dbReference type="NCBI Taxonomy" id="398580"/>
    <lineage>
        <taxon>Bacteria</taxon>
        <taxon>Pseudomonadati</taxon>
        <taxon>Pseudomonadota</taxon>
        <taxon>Alphaproteobacteria</taxon>
        <taxon>Rhodobacterales</taxon>
        <taxon>Roseobacteraceae</taxon>
        <taxon>Dinoroseobacter</taxon>
    </lineage>
</organism>
<protein>
    <recommendedName>
        <fullName evidence="1">Glutamyl-tRNA(Gln) amidotransferase subunit A</fullName>
        <shortName evidence="1">Glu-ADT subunit A</shortName>
        <ecNumber evidence="1">6.3.5.7</ecNumber>
    </recommendedName>
</protein>
<proteinExistence type="inferred from homology"/>
<gene>
    <name evidence="1" type="primary">gatA</name>
    <name type="ordered locus">Dshi_2785</name>
</gene>